<accession>Q9STM6</accession>
<keyword id="KW-0325">Glycoprotein</keyword>
<keyword id="KW-0378">Hydrolase</keyword>
<keyword id="KW-0442">Lipid degradation</keyword>
<keyword id="KW-0443">Lipid metabolism</keyword>
<keyword id="KW-1185">Reference proteome</keyword>
<keyword id="KW-0964">Secreted</keyword>
<keyword id="KW-0732">Signal</keyword>
<reference key="1">
    <citation type="journal article" date="2000" name="Nature">
        <title>Sequence and analysis of chromosome 3 of the plant Arabidopsis thaliana.</title>
        <authorList>
            <person name="Salanoubat M."/>
            <person name="Lemcke K."/>
            <person name="Rieger M."/>
            <person name="Ansorge W."/>
            <person name="Unseld M."/>
            <person name="Fartmann B."/>
            <person name="Valle G."/>
            <person name="Bloecker H."/>
            <person name="Perez-Alonso M."/>
            <person name="Obermaier B."/>
            <person name="Delseny M."/>
            <person name="Boutry M."/>
            <person name="Grivell L.A."/>
            <person name="Mache R."/>
            <person name="Puigdomenech P."/>
            <person name="De Simone V."/>
            <person name="Choisne N."/>
            <person name="Artiguenave F."/>
            <person name="Robert C."/>
            <person name="Brottier P."/>
            <person name="Wincker P."/>
            <person name="Cattolico L."/>
            <person name="Weissenbach J."/>
            <person name="Saurin W."/>
            <person name="Quetier F."/>
            <person name="Schaefer M."/>
            <person name="Mueller-Auer S."/>
            <person name="Gabel C."/>
            <person name="Fuchs M."/>
            <person name="Benes V."/>
            <person name="Wurmbach E."/>
            <person name="Drzonek H."/>
            <person name="Erfle H."/>
            <person name="Jordan N."/>
            <person name="Bangert S."/>
            <person name="Wiedelmann R."/>
            <person name="Kranz H."/>
            <person name="Voss H."/>
            <person name="Holland R."/>
            <person name="Brandt P."/>
            <person name="Nyakatura G."/>
            <person name="Vezzi A."/>
            <person name="D'Angelo M."/>
            <person name="Pallavicini A."/>
            <person name="Toppo S."/>
            <person name="Simionati B."/>
            <person name="Conrad A."/>
            <person name="Hornischer K."/>
            <person name="Kauer G."/>
            <person name="Loehnert T.-H."/>
            <person name="Nordsiek G."/>
            <person name="Reichelt J."/>
            <person name="Scharfe M."/>
            <person name="Schoen O."/>
            <person name="Bargues M."/>
            <person name="Terol J."/>
            <person name="Climent J."/>
            <person name="Navarro P."/>
            <person name="Collado C."/>
            <person name="Perez-Perez A."/>
            <person name="Ottenwaelder B."/>
            <person name="Duchemin D."/>
            <person name="Cooke R."/>
            <person name="Laudie M."/>
            <person name="Berger-Llauro C."/>
            <person name="Purnelle B."/>
            <person name="Masuy D."/>
            <person name="de Haan M."/>
            <person name="Maarse A.C."/>
            <person name="Alcaraz J.-P."/>
            <person name="Cottet A."/>
            <person name="Casacuberta E."/>
            <person name="Monfort A."/>
            <person name="Argiriou A."/>
            <person name="Flores M."/>
            <person name="Liguori R."/>
            <person name="Vitale D."/>
            <person name="Mannhaupt G."/>
            <person name="Haase D."/>
            <person name="Schoof H."/>
            <person name="Rudd S."/>
            <person name="Zaccaria P."/>
            <person name="Mewes H.-W."/>
            <person name="Mayer K.F.X."/>
            <person name="Kaul S."/>
            <person name="Town C.D."/>
            <person name="Koo H.L."/>
            <person name="Tallon L.J."/>
            <person name="Jenkins J."/>
            <person name="Rooney T."/>
            <person name="Rizzo M."/>
            <person name="Walts A."/>
            <person name="Utterback T."/>
            <person name="Fujii C.Y."/>
            <person name="Shea T.P."/>
            <person name="Creasy T.H."/>
            <person name="Haas B."/>
            <person name="Maiti R."/>
            <person name="Wu D."/>
            <person name="Peterson J."/>
            <person name="Van Aken S."/>
            <person name="Pai G."/>
            <person name="Militscher J."/>
            <person name="Sellers P."/>
            <person name="Gill J.E."/>
            <person name="Feldblyum T.V."/>
            <person name="Preuss D."/>
            <person name="Lin X."/>
            <person name="Nierman W.C."/>
            <person name="Salzberg S.L."/>
            <person name="White O."/>
            <person name="Venter J.C."/>
            <person name="Fraser C.M."/>
            <person name="Kaneko T."/>
            <person name="Nakamura Y."/>
            <person name="Sato S."/>
            <person name="Kato T."/>
            <person name="Asamizu E."/>
            <person name="Sasamoto S."/>
            <person name="Kimura T."/>
            <person name="Idesawa K."/>
            <person name="Kawashima K."/>
            <person name="Kishida Y."/>
            <person name="Kiyokawa C."/>
            <person name="Kohara M."/>
            <person name="Matsumoto M."/>
            <person name="Matsuno A."/>
            <person name="Muraki A."/>
            <person name="Nakayama S."/>
            <person name="Nakazaki N."/>
            <person name="Shinpo S."/>
            <person name="Takeuchi C."/>
            <person name="Wada T."/>
            <person name="Watanabe A."/>
            <person name="Yamada M."/>
            <person name="Yasuda M."/>
            <person name="Tabata S."/>
        </authorList>
    </citation>
    <scope>NUCLEOTIDE SEQUENCE [LARGE SCALE GENOMIC DNA]</scope>
    <source>
        <strain>cv. Columbia</strain>
    </source>
</reference>
<reference key="2">
    <citation type="journal article" date="2017" name="Plant J.">
        <title>Araport11: a complete reannotation of the Arabidopsis thaliana reference genome.</title>
        <authorList>
            <person name="Cheng C.Y."/>
            <person name="Krishnakumar V."/>
            <person name="Chan A.P."/>
            <person name="Thibaud-Nissen F."/>
            <person name="Schobel S."/>
            <person name="Town C.D."/>
        </authorList>
    </citation>
    <scope>GENOME REANNOTATION</scope>
    <source>
        <strain>cv. Columbia</strain>
    </source>
</reference>
<reference key="3">
    <citation type="journal article" date="2003" name="Science">
        <title>Empirical analysis of transcriptional activity in the Arabidopsis genome.</title>
        <authorList>
            <person name="Yamada K."/>
            <person name="Lim J."/>
            <person name="Dale J.M."/>
            <person name="Chen H."/>
            <person name="Shinn P."/>
            <person name="Palm C.J."/>
            <person name="Southwick A.M."/>
            <person name="Wu H.C."/>
            <person name="Kim C.J."/>
            <person name="Nguyen M."/>
            <person name="Pham P.K."/>
            <person name="Cheuk R.F."/>
            <person name="Karlin-Newmann G."/>
            <person name="Liu S.X."/>
            <person name="Lam B."/>
            <person name="Sakano H."/>
            <person name="Wu T."/>
            <person name="Yu G."/>
            <person name="Miranda M."/>
            <person name="Quach H.L."/>
            <person name="Tripp M."/>
            <person name="Chang C.H."/>
            <person name="Lee J.M."/>
            <person name="Toriumi M.J."/>
            <person name="Chan M.M."/>
            <person name="Tang C.C."/>
            <person name="Onodera C.S."/>
            <person name="Deng J.M."/>
            <person name="Akiyama K."/>
            <person name="Ansari Y."/>
            <person name="Arakawa T."/>
            <person name="Banh J."/>
            <person name="Banno F."/>
            <person name="Bowser L."/>
            <person name="Brooks S.Y."/>
            <person name="Carninci P."/>
            <person name="Chao Q."/>
            <person name="Choy N."/>
            <person name="Enju A."/>
            <person name="Goldsmith A.D."/>
            <person name="Gurjal M."/>
            <person name="Hansen N.F."/>
            <person name="Hayashizaki Y."/>
            <person name="Johnson-Hopson C."/>
            <person name="Hsuan V.W."/>
            <person name="Iida K."/>
            <person name="Karnes M."/>
            <person name="Khan S."/>
            <person name="Koesema E."/>
            <person name="Ishida J."/>
            <person name="Jiang P.X."/>
            <person name="Jones T."/>
            <person name="Kawai J."/>
            <person name="Kamiya A."/>
            <person name="Meyers C."/>
            <person name="Nakajima M."/>
            <person name="Narusaka M."/>
            <person name="Seki M."/>
            <person name="Sakurai T."/>
            <person name="Satou M."/>
            <person name="Tamse R."/>
            <person name="Vaysberg M."/>
            <person name="Wallender E.K."/>
            <person name="Wong C."/>
            <person name="Yamamura Y."/>
            <person name="Yuan S."/>
            <person name="Shinozaki K."/>
            <person name="Davis R.W."/>
            <person name="Theologis A."/>
            <person name="Ecker J.R."/>
        </authorList>
    </citation>
    <scope>NUCLEOTIDE SEQUENCE [LARGE SCALE MRNA]</scope>
    <source>
        <strain>cv. Columbia</strain>
    </source>
</reference>
<reference key="4">
    <citation type="journal article" date="2004" name="Prog. Lipid Res.">
        <title>GDSL family of serine esterases/lipases.</title>
        <authorList>
            <person name="Akoh C.C."/>
            <person name="Lee G.-C."/>
            <person name="Liaw Y.-C."/>
            <person name="Huang T.-H."/>
            <person name="Shaw J.-F."/>
        </authorList>
    </citation>
    <scope>REVIEW</scope>
</reference>
<reference key="5">
    <citation type="journal article" date="2008" name="Pak. J. Biol. Sci.">
        <title>Sequence analysis of GDSL lipase gene family in Arabidopsis thaliana.</title>
        <authorList>
            <person name="Ling H."/>
        </authorList>
    </citation>
    <scope>GENE FAMILY</scope>
</reference>
<gene>
    <name type="ordered locus">At3g48460</name>
    <name type="ORF">T29H11.20</name>
</gene>
<feature type="signal peptide" evidence="2">
    <location>
        <begin position="1"/>
        <end position="26"/>
    </location>
</feature>
<feature type="chain" id="PRO_0000367398" description="GDSL esterase/lipase At3g48460">
    <location>
        <begin position="27"/>
        <end position="381"/>
    </location>
</feature>
<feature type="active site" description="Nucleophile" evidence="1">
    <location>
        <position position="45"/>
    </location>
</feature>
<feature type="active site" evidence="1">
    <location>
        <position position="344"/>
    </location>
</feature>
<feature type="active site" evidence="1">
    <location>
        <position position="347"/>
    </location>
</feature>
<feature type="glycosylation site" description="N-linked (GlcNAc...) asparagine" evidence="2">
    <location>
        <position position="112"/>
    </location>
</feature>
<feature type="glycosylation site" description="N-linked (GlcNAc...) asparagine" evidence="2">
    <location>
        <position position="140"/>
    </location>
</feature>
<feature type="glycosylation site" description="N-linked (GlcNAc...) asparagine" evidence="2">
    <location>
        <position position="258"/>
    </location>
</feature>
<evidence type="ECO:0000250" key="1"/>
<evidence type="ECO:0000255" key="2"/>
<evidence type="ECO:0000305" key="3"/>
<organism>
    <name type="scientific">Arabidopsis thaliana</name>
    <name type="common">Mouse-ear cress</name>
    <dbReference type="NCBI Taxonomy" id="3702"/>
    <lineage>
        <taxon>Eukaryota</taxon>
        <taxon>Viridiplantae</taxon>
        <taxon>Streptophyta</taxon>
        <taxon>Embryophyta</taxon>
        <taxon>Tracheophyta</taxon>
        <taxon>Spermatophyta</taxon>
        <taxon>Magnoliopsida</taxon>
        <taxon>eudicotyledons</taxon>
        <taxon>Gunneridae</taxon>
        <taxon>Pentapetalae</taxon>
        <taxon>rosids</taxon>
        <taxon>malvids</taxon>
        <taxon>Brassicales</taxon>
        <taxon>Brassicaceae</taxon>
        <taxon>Camelineae</taxon>
        <taxon>Arabidopsis</taxon>
    </lineage>
</organism>
<sequence length="381" mass="42235">MSSSISPLLTTAISVAILLFSTISTAATIPNIHRPFNKIYAFGDSFTDTGNSRSGEGPAGFGHLSSPPYGMTFFRRPTNRYSDGRLTIDFVAESMNLPFLPPYLSLKTTNANGTATDTHGVNFAVSGSTVIKHAFFVKNNLSLDMTPQSIETELAWFEKYLETLGTNQKVSLFKDSLFWIGEIGVNDYAYTLGSTVSSDTIRELSISTFTRFLETLLNKGVKYMLVQGHPATGCLTLAMSLAAEDDRDSLGCVQSANNQSYTHNLALQSKLKQLRIKYPSATIVYADYWNAYRAVIKHPSKYGITEKFKACCGIGEPYNFQVFQTCGTDAATVCKDPNQYINWDGVHLTEAMYKVMADMFLDGTFTRPRFSDLLIKKLNYL</sequence>
<protein>
    <recommendedName>
        <fullName>GDSL esterase/lipase At3g48460</fullName>
        <ecNumber>3.1.1.-</ecNumber>
    </recommendedName>
    <alternativeName>
        <fullName>Extracellular lipase At3g48460</fullName>
    </alternativeName>
</protein>
<comment type="subcellular location">
    <subcellularLocation>
        <location evidence="3">Secreted</location>
    </subcellularLocation>
</comment>
<comment type="similarity">
    <text evidence="3">Belongs to the 'GDSL' lipolytic enzyme family.</text>
</comment>
<name>GDL57_ARATH</name>
<proteinExistence type="evidence at transcript level"/>
<dbReference type="EC" id="3.1.1.-"/>
<dbReference type="EMBL" id="AL049659">
    <property type="protein sequence ID" value="CAB41152.1"/>
    <property type="molecule type" value="Genomic_DNA"/>
</dbReference>
<dbReference type="EMBL" id="CP002686">
    <property type="protein sequence ID" value="AEE78419.1"/>
    <property type="molecule type" value="Genomic_DNA"/>
</dbReference>
<dbReference type="EMBL" id="BT003839">
    <property type="protein sequence ID" value="AAO41890.1"/>
    <property type="molecule type" value="mRNA"/>
</dbReference>
<dbReference type="EMBL" id="BT005192">
    <property type="protein sequence ID" value="AAO50725.1"/>
    <property type="molecule type" value="mRNA"/>
</dbReference>
<dbReference type="PIR" id="T06696">
    <property type="entry name" value="T06696"/>
</dbReference>
<dbReference type="RefSeq" id="NP_190416.1">
    <property type="nucleotide sequence ID" value="NM_114705.4"/>
</dbReference>
<dbReference type="SMR" id="Q9STM6"/>
<dbReference type="FunCoup" id="Q9STM6">
    <property type="interactions" value="112"/>
</dbReference>
<dbReference type="STRING" id="3702.Q9STM6"/>
<dbReference type="GlyGen" id="Q9STM6">
    <property type="glycosylation" value="3 sites"/>
</dbReference>
<dbReference type="iPTMnet" id="Q9STM6"/>
<dbReference type="PaxDb" id="3702-AT3G48460.1"/>
<dbReference type="ProteomicsDB" id="247099"/>
<dbReference type="EnsemblPlants" id="AT3G48460.1">
    <property type="protein sequence ID" value="AT3G48460.1"/>
    <property type="gene ID" value="AT3G48460"/>
</dbReference>
<dbReference type="GeneID" id="824005"/>
<dbReference type="Gramene" id="AT3G48460.1">
    <property type="protein sequence ID" value="AT3G48460.1"/>
    <property type="gene ID" value="AT3G48460"/>
</dbReference>
<dbReference type="KEGG" id="ath:AT3G48460"/>
<dbReference type="Araport" id="AT3G48460"/>
<dbReference type="TAIR" id="AT3G48460">
    <property type="gene designation" value="SFAR4"/>
</dbReference>
<dbReference type="eggNOG" id="ENOG502QSMM">
    <property type="taxonomic scope" value="Eukaryota"/>
</dbReference>
<dbReference type="HOGENOM" id="CLU_015101_2_1_1"/>
<dbReference type="InParanoid" id="Q9STM6"/>
<dbReference type="OMA" id="PFNKIYA"/>
<dbReference type="PhylomeDB" id="Q9STM6"/>
<dbReference type="BioCyc" id="ARA:AT3G48460-MONOMER"/>
<dbReference type="PRO" id="PR:Q9STM6"/>
<dbReference type="Proteomes" id="UP000006548">
    <property type="component" value="Chromosome 3"/>
</dbReference>
<dbReference type="ExpressionAtlas" id="Q9STM6">
    <property type="expression patterns" value="baseline and differential"/>
</dbReference>
<dbReference type="GO" id="GO:0005576">
    <property type="term" value="C:extracellular region"/>
    <property type="evidence" value="ECO:0007669"/>
    <property type="project" value="UniProtKB-SubCell"/>
</dbReference>
<dbReference type="GO" id="GO:0008126">
    <property type="term" value="F:acetylesterase activity"/>
    <property type="evidence" value="ECO:0000314"/>
    <property type="project" value="TAIR"/>
</dbReference>
<dbReference type="GO" id="GO:0006631">
    <property type="term" value="P:fatty acid metabolic process"/>
    <property type="evidence" value="ECO:0000315"/>
    <property type="project" value="TAIR"/>
</dbReference>
<dbReference type="GO" id="GO:0016042">
    <property type="term" value="P:lipid catabolic process"/>
    <property type="evidence" value="ECO:0007669"/>
    <property type="project" value="UniProtKB-KW"/>
</dbReference>
<dbReference type="CDD" id="cd01837">
    <property type="entry name" value="SGNH_plant_lipase_like"/>
    <property type="match status" value="1"/>
</dbReference>
<dbReference type="FunFam" id="3.40.50.1110:FF:000062">
    <property type="entry name" value="GDSL-motif lipase/hydrolase family protein"/>
    <property type="match status" value="1"/>
</dbReference>
<dbReference type="Gene3D" id="3.40.50.1110">
    <property type="entry name" value="SGNH hydrolase"/>
    <property type="match status" value="1"/>
</dbReference>
<dbReference type="InterPro" id="IPR001087">
    <property type="entry name" value="GDSL"/>
</dbReference>
<dbReference type="InterPro" id="IPR036514">
    <property type="entry name" value="SGNH_hydro_sf"/>
</dbReference>
<dbReference type="InterPro" id="IPR035669">
    <property type="entry name" value="SGNH_plant_lipase-like"/>
</dbReference>
<dbReference type="PANTHER" id="PTHR22835:SF557">
    <property type="entry name" value="LIPASE_HYDROLASE FAMILY PROTEIN, PUTATIVE, EXPRESSED-RELATED"/>
    <property type="match status" value="1"/>
</dbReference>
<dbReference type="PANTHER" id="PTHR22835">
    <property type="entry name" value="ZINC FINGER FYVE DOMAIN CONTAINING PROTEIN"/>
    <property type="match status" value="1"/>
</dbReference>
<dbReference type="Pfam" id="PF00657">
    <property type="entry name" value="Lipase_GDSL"/>
    <property type="match status" value="1"/>
</dbReference>
<dbReference type="SUPFAM" id="SSF52266">
    <property type="entry name" value="SGNH hydrolase"/>
    <property type="match status" value="1"/>
</dbReference>